<sequence>MSHIRNFSIIAHIDHGKSTLADRFIQMCGGLSEREMEAQVLDSMDLERERGITIKAHSVTLYYKAKDGITYQLNFIDTPGHVDFTYEVSRSLAACEGALLVVDAGQGVEAQSVANCYTAIEQGLEVMPVLNKMDLPQADPDRVKEEIEKIIGIDATDAVACSAKSGMGVDEVLERLVATIPAPTGNIEDPLQALIIDSWFDNYLGVVSLVRVRHGRVKKGDKILVKSTGKLHLVDSVGVFNPKHTATVDLKAGEVGFIIAGIKDIHGAPVGDTLTLSTTPDVDVLPGFKRIQPQVYAGLFPVSSDDFEDFREALQKLTLNDSSLQYLPESSDALGFGFRCGFLGMLHMEIIQERLEREYNLDLITTAPTVIFELLLKTGETIYVDNPSKLPDLSSIEDMREPIVRANILVPQEHLGNVITLCIEKRGVQHDMLFLGTQVQVSYDLPMNEVVLDFFDRLKSVSRGYASLDYHFDRYQSANLVKLDVLINAEKVDALALIVHRDNAHYKGRALTEKMKELIPRQMFDVAIQAAIGGQIVARTTVKALRKNVLAKCYGGDVSRKRKLLEKQKAGKKRMKQVGNVEIPQEAFLAVLRLE</sequence>
<name>LEPA_PSE14</name>
<feature type="chain" id="PRO_0000224786" description="Elongation factor 4">
    <location>
        <begin position="1"/>
        <end position="595"/>
    </location>
</feature>
<feature type="domain" description="tr-type G">
    <location>
        <begin position="2"/>
        <end position="184"/>
    </location>
</feature>
<feature type="binding site" evidence="1">
    <location>
        <begin position="14"/>
        <end position="19"/>
    </location>
    <ligand>
        <name>GTP</name>
        <dbReference type="ChEBI" id="CHEBI:37565"/>
    </ligand>
</feature>
<feature type="binding site" evidence="1">
    <location>
        <begin position="131"/>
        <end position="134"/>
    </location>
    <ligand>
        <name>GTP</name>
        <dbReference type="ChEBI" id="CHEBI:37565"/>
    </ligand>
</feature>
<proteinExistence type="inferred from homology"/>
<reference key="1">
    <citation type="journal article" date="2005" name="J. Bacteriol.">
        <title>Whole-genome sequence analysis of Pseudomonas syringae pv. phaseolicola 1448A reveals divergence among pathovars in genes involved in virulence and transposition.</title>
        <authorList>
            <person name="Joardar V."/>
            <person name="Lindeberg M."/>
            <person name="Jackson R.W."/>
            <person name="Selengut J."/>
            <person name="Dodson R."/>
            <person name="Brinkac L.M."/>
            <person name="Daugherty S.C."/>
            <person name="DeBoy R.T."/>
            <person name="Durkin A.S."/>
            <person name="Gwinn Giglio M."/>
            <person name="Madupu R."/>
            <person name="Nelson W.C."/>
            <person name="Rosovitz M.J."/>
            <person name="Sullivan S.A."/>
            <person name="Crabtree J."/>
            <person name="Creasy T."/>
            <person name="Davidsen T.M."/>
            <person name="Haft D.H."/>
            <person name="Zafar N."/>
            <person name="Zhou L."/>
            <person name="Halpin R."/>
            <person name="Holley T."/>
            <person name="Khouri H.M."/>
            <person name="Feldblyum T.V."/>
            <person name="White O."/>
            <person name="Fraser C.M."/>
            <person name="Chatterjee A.K."/>
            <person name="Cartinhour S."/>
            <person name="Schneider D."/>
            <person name="Mansfield J.W."/>
            <person name="Collmer A."/>
            <person name="Buell R."/>
        </authorList>
    </citation>
    <scope>NUCLEOTIDE SEQUENCE [LARGE SCALE GENOMIC DNA]</scope>
    <source>
        <strain>1448A / Race 6</strain>
    </source>
</reference>
<keyword id="KW-0997">Cell inner membrane</keyword>
<keyword id="KW-1003">Cell membrane</keyword>
<keyword id="KW-0342">GTP-binding</keyword>
<keyword id="KW-0378">Hydrolase</keyword>
<keyword id="KW-0472">Membrane</keyword>
<keyword id="KW-0547">Nucleotide-binding</keyword>
<keyword id="KW-0648">Protein biosynthesis</keyword>
<dbReference type="EC" id="3.6.5.n1" evidence="1"/>
<dbReference type="EMBL" id="CP000058">
    <property type="protein sequence ID" value="AAZ34171.1"/>
    <property type="molecule type" value="Genomic_DNA"/>
</dbReference>
<dbReference type="SMR" id="Q48EV0"/>
<dbReference type="KEGG" id="psp:PSPPH_3951"/>
<dbReference type="eggNOG" id="COG0481">
    <property type="taxonomic scope" value="Bacteria"/>
</dbReference>
<dbReference type="HOGENOM" id="CLU_009995_3_3_6"/>
<dbReference type="Proteomes" id="UP000000551">
    <property type="component" value="Chromosome"/>
</dbReference>
<dbReference type="GO" id="GO:0005886">
    <property type="term" value="C:plasma membrane"/>
    <property type="evidence" value="ECO:0007669"/>
    <property type="project" value="UniProtKB-SubCell"/>
</dbReference>
<dbReference type="GO" id="GO:0005525">
    <property type="term" value="F:GTP binding"/>
    <property type="evidence" value="ECO:0007669"/>
    <property type="project" value="UniProtKB-UniRule"/>
</dbReference>
<dbReference type="GO" id="GO:0003924">
    <property type="term" value="F:GTPase activity"/>
    <property type="evidence" value="ECO:0007669"/>
    <property type="project" value="UniProtKB-UniRule"/>
</dbReference>
<dbReference type="GO" id="GO:0097216">
    <property type="term" value="F:guanosine tetraphosphate binding"/>
    <property type="evidence" value="ECO:0007669"/>
    <property type="project" value="UniProtKB-ARBA"/>
</dbReference>
<dbReference type="GO" id="GO:0043022">
    <property type="term" value="F:ribosome binding"/>
    <property type="evidence" value="ECO:0007669"/>
    <property type="project" value="UniProtKB-UniRule"/>
</dbReference>
<dbReference type="GO" id="GO:0003746">
    <property type="term" value="F:translation elongation factor activity"/>
    <property type="evidence" value="ECO:0007669"/>
    <property type="project" value="UniProtKB-UniRule"/>
</dbReference>
<dbReference type="GO" id="GO:0045727">
    <property type="term" value="P:positive regulation of translation"/>
    <property type="evidence" value="ECO:0007669"/>
    <property type="project" value="UniProtKB-UniRule"/>
</dbReference>
<dbReference type="CDD" id="cd03699">
    <property type="entry name" value="EF4_II"/>
    <property type="match status" value="1"/>
</dbReference>
<dbReference type="CDD" id="cd16260">
    <property type="entry name" value="EF4_III"/>
    <property type="match status" value="1"/>
</dbReference>
<dbReference type="CDD" id="cd01890">
    <property type="entry name" value="LepA"/>
    <property type="match status" value="1"/>
</dbReference>
<dbReference type="CDD" id="cd03709">
    <property type="entry name" value="lepA_C"/>
    <property type="match status" value="1"/>
</dbReference>
<dbReference type="FunFam" id="3.40.50.300:FF:000078">
    <property type="entry name" value="Elongation factor 4"/>
    <property type="match status" value="1"/>
</dbReference>
<dbReference type="FunFam" id="2.40.30.10:FF:000015">
    <property type="entry name" value="Translation factor GUF1, mitochondrial"/>
    <property type="match status" value="1"/>
</dbReference>
<dbReference type="FunFam" id="3.30.70.240:FF:000007">
    <property type="entry name" value="Translation factor GUF1, mitochondrial"/>
    <property type="match status" value="1"/>
</dbReference>
<dbReference type="FunFam" id="3.30.70.2570:FF:000001">
    <property type="entry name" value="Translation factor GUF1, mitochondrial"/>
    <property type="match status" value="1"/>
</dbReference>
<dbReference type="FunFam" id="3.30.70.870:FF:000004">
    <property type="entry name" value="Translation factor GUF1, mitochondrial"/>
    <property type="match status" value="1"/>
</dbReference>
<dbReference type="Gene3D" id="3.30.70.240">
    <property type="match status" value="1"/>
</dbReference>
<dbReference type="Gene3D" id="3.30.70.2570">
    <property type="entry name" value="Elongation factor 4, C-terminal domain"/>
    <property type="match status" value="1"/>
</dbReference>
<dbReference type="Gene3D" id="3.30.70.870">
    <property type="entry name" value="Elongation Factor G (Translational Gtpase), domain 3"/>
    <property type="match status" value="1"/>
</dbReference>
<dbReference type="Gene3D" id="3.40.50.300">
    <property type="entry name" value="P-loop containing nucleotide triphosphate hydrolases"/>
    <property type="match status" value="1"/>
</dbReference>
<dbReference type="Gene3D" id="2.40.30.10">
    <property type="entry name" value="Translation factors"/>
    <property type="match status" value="1"/>
</dbReference>
<dbReference type="HAMAP" id="MF_00071">
    <property type="entry name" value="LepA"/>
    <property type="match status" value="1"/>
</dbReference>
<dbReference type="InterPro" id="IPR006297">
    <property type="entry name" value="EF-4"/>
</dbReference>
<dbReference type="InterPro" id="IPR035647">
    <property type="entry name" value="EFG_III/V"/>
</dbReference>
<dbReference type="InterPro" id="IPR000640">
    <property type="entry name" value="EFG_V-like"/>
</dbReference>
<dbReference type="InterPro" id="IPR004161">
    <property type="entry name" value="EFTu-like_2"/>
</dbReference>
<dbReference type="InterPro" id="IPR038363">
    <property type="entry name" value="LepA_C_sf"/>
</dbReference>
<dbReference type="InterPro" id="IPR013842">
    <property type="entry name" value="LepA_CTD"/>
</dbReference>
<dbReference type="InterPro" id="IPR035654">
    <property type="entry name" value="LepA_IV"/>
</dbReference>
<dbReference type="InterPro" id="IPR027417">
    <property type="entry name" value="P-loop_NTPase"/>
</dbReference>
<dbReference type="InterPro" id="IPR005225">
    <property type="entry name" value="Small_GTP-bd"/>
</dbReference>
<dbReference type="InterPro" id="IPR000795">
    <property type="entry name" value="T_Tr_GTP-bd_dom"/>
</dbReference>
<dbReference type="InterPro" id="IPR009000">
    <property type="entry name" value="Transl_B-barrel_sf"/>
</dbReference>
<dbReference type="NCBIfam" id="TIGR01393">
    <property type="entry name" value="lepA"/>
    <property type="match status" value="1"/>
</dbReference>
<dbReference type="NCBIfam" id="TIGR00231">
    <property type="entry name" value="small_GTP"/>
    <property type="match status" value="1"/>
</dbReference>
<dbReference type="PANTHER" id="PTHR43512:SF4">
    <property type="entry name" value="TRANSLATION FACTOR GUF1 HOMOLOG, CHLOROPLASTIC"/>
    <property type="match status" value="1"/>
</dbReference>
<dbReference type="PANTHER" id="PTHR43512">
    <property type="entry name" value="TRANSLATION FACTOR GUF1-RELATED"/>
    <property type="match status" value="1"/>
</dbReference>
<dbReference type="Pfam" id="PF00679">
    <property type="entry name" value="EFG_C"/>
    <property type="match status" value="1"/>
</dbReference>
<dbReference type="Pfam" id="PF00009">
    <property type="entry name" value="GTP_EFTU"/>
    <property type="match status" value="1"/>
</dbReference>
<dbReference type="Pfam" id="PF03144">
    <property type="entry name" value="GTP_EFTU_D2"/>
    <property type="match status" value="1"/>
</dbReference>
<dbReference type="Pfam" id="PF06421">
    <property type="entry name" value="LepA_C"/>
    <property type="match status" value="1"/>
</dbReference>
<dbReference type="PRINTS" id="PR00315">
    <property type="entry name" value="ELONGATNFCT"/>
</dbReference>
<dbReference type="SUPFAM" id="SSF54980">
    <property type="entry name" value="EF-G C-terminal domain-like"/>
    <property type="match status" value="2"/>
</dbReference>
<dbReference type="SUPFAM" id="SSF52540">
    <property type="entry name" value="P-loop containing nucleoside triphosphate hydrolases"/>
    <property type="match status" value="1"/>
</dbReference>
<dbReference type="SUPFAM" id="SSF50447">
    <property type="entry name" value="Translation proteins"/>
    <property type="match status" value="1"/>
</dbReference>
<dbReference type="PROSITE" id="PS51722">
    <property type="entry name" value="G_TR_2"/>
    <property type="match status" value="1"/>
</dbReference>
<accession>Q48EV0</accession>
<evidence type="ECO:0000255" key="1">
    <source>
        <dbReference type="HAMAP-Rule" id="MF_00071"/>
    </source>
</evidence>
<protein>
    <recommendedName>
        <fullName evidence="1">Elongation factor 4</fullName>
        <shortName evidence="1">EF-4</shortName>
        <ecNumber evidence="1">3.6.5.n1</ecNumber>
    </recommendedName>
    <alternativeName>
        <fullName evidence="1">Ribosomal back-translocase LepA</fullName>
    </alternativeName>
</protein>
<comment type="function">
    <text evidence="1">Required for accurate and efficient protein synthesis under certain stress conditions. May act as a fidelity factor of the translation reaction, by catalyzing a one-codon backward translocation of tRNAs on improperly translocated ribosomes. Back-translocation proceeds from a post-translocation (POST) complex to a pre-translocation (PRE) complex, thus giving elongation factor G a second chance to translocate the tRNAs correctly. Binds to ribosomes in a GTP-dependent manner.</text>
</comment>
<comment type="catalytic activity">
    <reaction evidence="1">
        <text>GTP + H2O = GDP + phosphate + H(+)</text>
        <dbReference type="Rhea" id="RHEA:19669"/>
        <dbReference type="ChEBI" id="CHEBI:15377"/>
        <dbReference type="ChEBI" id="CHEBI:15378"/>
        <dbReference type="ChEBI" id="CHEBI:37565"/>
        <dbReference type="ChEBI" id="CHEBI:43474"/>
        <dbReference type="ChEBI" id="CHEBI:58189"/>
        <dbReference type="EC" id="3.6.5.n1"/>
    </reaction>
</comment>
<comment type="subcellular location">
    <subcellularLocation>
        <location evidence="1">Cell inner membrane</location>
        <topology evidence="1">Peripheral membrane protein</topology>
        <orientation evidence="1">Cytoplasmic side</orientation>
    </subcellularLocation>
</comment>
<comment type="similarity">
    <text evidence="1">Belongs to the TRAFAC class translation factor GTPase superfamily. Classic translation factor GTPase family. LepA subfamily.</text>
</comment>
<organism>
    <name type="scientific">Pseudomonas savastanoi pv. phaseolicola (strain 1448A / Race 6)</name>
    <name type="common">Pseudomonas syringae pv. phaseolicola (strain 1448A / Race 6)</name>
    <dbReference type="NCBI Taxonomy" id="264730"/>
    <lineage>
        <taxon>Bacteria</taxon>
        <taxon>Pseudomonadati</taxon>
        <taxon>Pseudomonadota</taxon>
        <taxon>Gammaproteobacteria</taxon>
        <taxon>Pseudomonadales</taxon>
        <taxon>Pseudomonadaceae</taxon>
        <taxon>Pseudomonas</taxon>
    </lineage>
</organism>
<gene>
    <name evidence="1" type="primary">lepA</name>
    <name type="ordered locus">PSPPH_3951</name>
</gene>